<dbReference type="EC" id="1.2.1.41" evidence="1"/>
<dbReference type="EMBL" id="CP001104">
    <property type="protein sequence ID" value="ACR71988.1"/>
    <property type="molecule type" value="Genomic_DNA"/>
</dbReference>
<dbReference type="RefSeq" id="WP_012739223.1">
    <property type="nucleotide sequence ID" value="NC_012778.1"/>
</dbReference>
<dbReference type="SMR" id="C4Z075"/>
<dbReference type="STRING" id="515620.EUBELI_00987"/>
<dbReference type="GeneID" id="41355715"/>
<dbReference type="KEGG" id="eel:EUBELI_00987"/>
<dbReference type="eggNOG" id="COG0014">
    <property type="taxonomic scope" value="Bacteria"/>
</dbReference>
<dbReference type="HOGENOM" id="CLU_030231_0_0_9"/>
<dbReference type="UniPathway" id="UPA00098">
    <property type="reaction ID" value="UER00360"/>
</dbReference>
<dbReference type="Proteomes" id="UP000001476">
    <property type="component" value="Chromosome"/>
</dbReference>
<dbReference type="GO" id="GO:0005737">
    <property type="term" value="C:cytoplasm"/>
    <property type="evidence" value="ECO:0007669"/>
    <property type="project" value="UniProtKB-SubCell"/>
</dbReference>
<dbReference type="GO" id="GO:0004350">
    <property type="term" value="F:glutamate-5-semialdehyde dehydrogenase activity"/>
    <property type="evidence" value="ECO:0007669"/>
    <property type="project" value="UniProtKB-UniRule"/>
</dbReference>
<dbReference type="GO" id="GO:0050661">
    <property type="term" value="F:NADP binding"/>
    <property type="evidence" value="ECO:0007669"/>
    <property type="project" value="InterPro"/>
</dbReference>
<dbReference type="GO" id="GO:0055129">
    <property type="term" value="P:L-proline biosynthetic process"/>
    <property type="evidence" value="ECO:0007669"/>
    <property type="project" value="UniProtKB-UniRule"/>
</dbReference>
<dbReference type="CDD" id="cd07079">
    <property type="entry name" value="ALDH_F18-19_ProA-GPR"/>
    <property type="match status" value="1"/>
</dbReference>
<dbReference type="FunFam" id="3.40.309.10:FF:000006">
    <property type="entry name" value="Gamma-glutamyl phosphate reductase"/>
    <property type="match status" value="1"/>
</dbReference>
<dbReference type="Gene3D" id="3.40.605.10">
    <property type="entry name" value="Aldehyde Dehydrogenase, Chain A, domain 1"/>
    <property type="match status" value="1"/>
</dbReference>
<dbReference type="Gene3D" id="3.40.309.10">
    <property type="entry name" value="Aldehyde Dehydrogenase, Chain A, domain 2"/>
    <property type="match status" value="1"/>
</dbReference>
<dbReference type="HAMAP" id="MF_00412">
    <property type="entry name" value="ProA"/>
    <property type="match status" value="1"/>
</dbReference>
<dbReference type="InterPro" id="IPR016161">
    <property type="entry name" value="Ald_DH/histidinol_DH"/>
</dbReference>
<dbReference type="InterPro" id="IPR016163">
    <property type="entry name" value="Ald_DH_C"/>
</dbReference>
<dbReference type="InterPro" id="IPR016162">
    <property type="entry name" value="Ald_DH_N"/>
</dbReference>
<dbReference type="InterPro" id="IPR015590">
    <property type="entry name" value="Aldehyde_DH_dom"/>
</dbReference>
<dbReference type="InterPro" id="IPR020593">
    <property type="entry name" value="G-glutamylP_reductase_CS"/>
</dbReference>
<dbReference type="InterPro" id="IPR012134">
    <property type="entry name" value="Glu-5-SA_DH"/>
</dbReference>
<dbReference type="InterPro" id="IPR000965">
    <property type="entry name" value="GPR_dom"/>
</dbReference>
<dbReference type="NCBIfam" id="NF001221">
    <property type="entry name" value="PRK00197.1"/>
    <property type="match status" value="1"/>
</dbReference>
<dbReference type="NCBIfam" id="TIGR00407">
    <property type="entry name" value="proA"/>
    <property type="match status" value="1"/>
</dbReference>
<dbReference type="PANTHER" id="PTHR11063:SF8">
    <property type="entry name" value="DELTA-1-PYRROLINE-5-CARBOXYLATE SYNTHASE"/>
    <property type="match status" value="1"/>
</dbReference>
<dbReference type="PANTHER" id="PTHR11063">
    <property type="entry name" value="GLUTAMATE SEMIALDEHYDE DEHYDROGENASE"/>
    <property type="match status" value="1"/>
</dbReference>
<dbReference type="Pfam" id="PF00171">
    <property type="entry name" value="Aldedh"/>
    <property type="match status" value="2"/>
</dbReference>
<dbReference type="PIRSF" id="PIRSF000151">
    <property type="entry name" value="GPR"/>
    <property type="match status" value="1"/>
</dbReference>
<dbReference type="SUPFAM" id="SSF53720">
    <property type="entry name" value="ALDH-like"/>
    <property type="match status" value="1"/>
</dbReference>
<dbReference type="PROSITE" id="PS01223">
    <property type="entry name" value="PROA"/>
    <property type="match status" value="1"/>
</dbReference>
<proteinExistence type="inferred from homology"/>
<keyword id="KW-0028">Amino-acid biosynthesis</keyword>
<keyword id="KW-0963">Cytoplasm</keyword>
<keyword id="KW-0521">NADP</keyword>
<keyword id="KW-0560">Oxidoreductase</keyword>
<keyword id="KW-0641">Proline biosynthesis</keyword>
<keyword id="KW-1185">Reference proteome</keyword>
<evidence type="ECO:0000255" key="1">
    <source>
        <dbReference type="HAMAP-Rule" id="MF_00412"/>
    </source>
</evidence>
<name>PROA_LACE2</name>
<comment type="function">
    <text evidence="1">Catalyzes the NADPH-dependent reduction of L-glutamate 5-phosphate into L-glutamate 5-semialdehyde and phosphate. The product spontaneously undergoes cyclization to form 1-pyrroline-5-carboxylate.</text>
</comment>
<comment type="catalytic activity">
    <reaction evidence="1">
        <text>L-glutamate 5-semialdehyde + phosphate + NADP(+) = L-glutamyl 5-phosphate + NADPH + H(+)</text>
        <dbReference type="Rhea" id="RHEA:19541"/>
        <dbReference type="ChEBI" id="CHEBI:15378"/>
        <dbReference type="ChEBI" id="CHEBI:43474"/>
        <dbReference type="ChEBI" id="CHEBI:57783"/>
        <dbReference type="ChEBI" id="CHEBI:58066"/>
        <dbReference type="ChEBI" id="CHEBI:58274"/>
        <dbReference type="ChEBI" id="CHEBI:58349"/>
        <dbReference type="EC" id="1.2.1.41"/>
    </reaction>
</comment>
<comment type="pathway">
    <text evidence="1">Amino-acid biosynthesis; L-proline biosynthesis; L-glutamate 5-semialdehyde from L-glutamate: step 2/2.</text>
</comment>
<comment type="subcellular location">
    <subcellularLocation>
        <location evidence="1">Cytoplasm</location>
    </subcellularLocation>
</comment>
<comment type="similarity">
    <text evidence="1">Belongs to the gamma-glutamyl phosphate reductase family.</text>
</comment>
<gene>
    <name evidence="1" type="primary">proA</name>
    <name type="ordered locus">EUBELI_00987</name>
</gene>
<protein>
    <recommendedName>
        <fullName evidence="1">Gamma-glutamyl phosphate reductase</fullName>
        <shortName evidence="1">GPR</shortName>
        <ecNumber evidence="1">1.2.1.41</ecNumber>
    </recommendedName>
    <alternativeName>
        <fullName evidence="1">Glutamate-5-semialdehyde dehydrogenase</fullName>
    </alternativeName>
    <alternativeName>
        <fullName evidence="1">Glutamyl-gamma-semialdehyde dehydrogenase</fullName>
        <shortName evidence="1">GSA dehydrogenase</shortName>
    </alternativeName>
</protein>
<feature type="chain" id="PRO_1000205995" description="Gamma-glutamyl phosphate reductase">
    <location>
        <begin position="1"/>
        <end position="415"/>
    </location>
</feature>
<sequence>MESLEQIGIKAKKASRYLAKLGIDEKNKALEAVADALTANAESIIAANEKDLVNAKANGMKPALIDRLTLDIKRINAMADGIRVLTGLEDPVGEVTGMKKRPNGLVIGTKRVPLGVVAIIYESRPNVTADAFGLTFKSGNACILRGGSDSINSNIAIADVIANALSDNGINPDVINLIKDTDRALVNQLMKMNDYIDVIIPRGGAGLIKNVVNNSTVPVIETGTGNCHVYVDEYADIDMAVKVIYNAKTSRIGVCNACESLVIHKAVAKQAIPLIVNALKEKNVEVRGDEYAMQCDSRIVPASDDDWGMEYLDYIISVKTVDSVDEAIEHINTYNTGHSESIITKDYNNANRFLDEIDAACVYVNASTRFSDGFEFGFGAEIGISTQKLHARGPMGLKALTTTKYVIYGEGQIRQ</sequence>
<reference key="1">
    <citation type="journal article" date="2009" name="Proc. Natl. Acad. Sci. U.S.A.">
        <title>Characterizing a model human gut microbiota composed of members of its two dominant bacterial phyla.</title>
        <authorList>
            <person name="Mahowald M.A."/>
            <person name="Rey F.E."/>
            <person name="Seedorf H."/>
            <person name="Turnbaugh P.J."/>
            <person name="Fulton R.S."/>
            <person name="Wollam A."/>
            <person name="Shah N."/>
            <person name="Wang C."/>
            <person name="Magrini V."/>
            <person name="Wilson R.K."/>
            <person name="Cantarel B.L."/>
            <person name="Coutinho P.M."/>
            <person name="Henrissat B."/>
            <person name="Crock L.W."/>
            <person name="Russell A."/>
            <person name="Verberkmoes N.C."/>
            <person name="Hettich R.L."/>
            <person name="Gordon J.I."/>
        </authorList>
    </citation>
    <scope>NUCLEOTIDE SEQUENCE [LARGE SCALE GENOMIC DNA]</scope>
    <source>
        <strain>ATCC 27750 / DSM 3376 / VPI C15-48 / C15-B4</strain>
    </source>
</reference>
<organism>
    <name type="scientific">Lachnospira eligens (strain ATCC 27750 / DSM 3376 / VPI C15-48 / C15-B4)</name>
    <name type="common">Eubacterium eligens</name>
    <dbReference type="NCBI Taxonomy" id="515620"/>
    <lineage>
        <taxon>Bacteria</taxon>
        <taxon>Bacillati</taxon>
        <taxon>Bacillota</taxon>
        <taxon>Clostridia</taxon>
        <taxon>Lachnospirales</taxon>
        <taxon>Lachnospiraceae</taxon>
        <taxon>Lachnospira</taxon>
    </lineage>
</organism>
<accession>C4Z075</accession>